<protein>
    <recommendedName>
        <fullName evidence="1">Thymidine kinase</fullName>
        <ecNumber evidence="1">2.7.1.21</ecNumber>
    </recommendedName>
</protein>
<organism>
    <name type="scientific">Blochmanniella floridana</name>
    <dbReference type="NCBI Taxonomy" id="203907"/>
    <lineage>
        <taxon>Bacteria</taxon>
        <taxon>Pseudomonadati</taxon>
        <taxon>Pseudomonadota</taxon>
        <taxon>Gammaproteobacteria</taxon>
        <taxon>Enterobacterales</taxon>
        <taxon>Enterobacteriaceae</taxon>
        <taxon>ant endosymbionts</taxon>
        <taxon>Candidatus Blochmanniella</taxon>
    </lineage>
</organism>
<reference key="1">
    <citation type="journal article" date="2003" name="Proc. Natl. Acad. Sci. U.S.A.">
        <title>The genome sequence of Blochmannia floridanus: comparative analysis of reduced genomes.</title>
        <authorList>
            <person name="Gil R."/>
            <person name="Silva F.J."/>
            <person name="Zientz E."/>
            <person name="Delmotte F."/>
            <person name="Gonzalez-Candelas F."/>
            <person name="Latorre A."/>
            <person name="Rausell C."/>
            <person name="Kamerbeek J."/>
            <person name="Gadau J."/>
            <person name="Hoelldobler B."/>
            <person name="van Ham R.C.H.J."/>
            <person name="Gross R."/>
            <person name="Moya A."/>
        </authorList>
    </citation>
    <scope>NUCLEOTIDE SEQUENCE [LARGE SCALE GENOMIC DNA]</scope>
</reference>
<name>KITH_BLOFL</name>
<accession>Q7VQZ6</accession>
<dbReference type="EC" id="2.7.1.21" evidence="1"/>
<dbReference type="EMBL" id="BX248583">
    <property type="protein sequence ID" value="CAD83496.1"/>
    <property type="molecule type" value="Genomic_DNA"/>
</dbReference>
<dbReference type="SMR" id="Q7VQZ6"/>
<dbReference type="STRING" id="203907.Bfl434"/>
<dbReference type="KEGG" id="bfl:Bfl434"/>
<dbReference type="eggNOG" id="COG1435">
    <property type="taxonomic scope" value="Bacteria"/>
</dbReference>
<dbReference type="HOGENOM" id="CLU_064400_2_1_6"/>
<dbReference type="OrthoDB" id="9781579at2"/>
<dbReference type="Proteomes" id="UP000002192">
    <property type="component" value="Chromosome"/>
</dbReference>
<dbReference type="GO" id="GO:0005829">
    <property type="term" value="C:cytosol"/>
    <property type="evidence" value="ECO:0007669"/>
    <property type="project" value="TreeGrafter"/>
</dbReference>
<dbReference type="GO" id="GO:0005524">
    <property type="term" value="F:ATP binding"/>
    <property type="evidence" value="ECO:0007669"/>
    <property type="project" value="UniProtKB-UniRule"/>
</dbReference>
<dbReference type="GO" id="GO:0004797">
    <property type="term" value="F:thymidine kinase activity"/>
    <property type="evidence" value="ECO:0007669"/>
    <property type="project" value="UniProtKB-UniRule"/>
</dbReference>
<dbReference type="GO" id="GO:0008270">
    <property type="term" value="F:zinc ion binding"/>
    <property type="evidence" value="ECO:0007669"/>
    <property type="project" value="UniProtKB-UniRule"/>
</dbReference>
<dbReference type="GO" id="GO:0071897">
    <property type="term" value="P:DNA biosynthetic process"/>
    <property type="evidence" value="ECO:0007669"/>
    <property type="project" value="UniProtKB-KW"/>
</dbReference>
<dbReference type="GO" id="GO:0046104">
    <property type="term" value="P:thymidine metabolic process"/>
    <property type="evidence" value="ECO:0007669"/>
    <property type="project" value="TreeGrafter"/>
</dbReference>
<dbReference type="Gene3D" id="3.30.60.20">
    <property type="match status" value="1"/>
</dbReference>
<dbReference type="Gene3D" id="3.40.50.300">
    <property type="entry name" value="P-loop containing nucleotide triphosphate hydrolases"/>
    <property type="match status" value="1"/>
</dbReference>
<dbReference type="HAMAP" id="MF_00124">
    <property type="entry name" value="Thymidine_kinase"/>
    <property type="match status" value="1"/>
</dbReference>
<dbReference type="InterPro" id="IPR027417">
    <property type="entry name" value="P-loop_NTPase"/>
</dbReference>
<dbReference type="InterPro" id="IPR001267">
    <property type="entry name" value="Thymidine_kinase"/>
</dbReference>
<dbReference type="NCBIfam" id="NF003300">
    <property type="entry name" value="PRK04296.1-5"/>
    <property type="match status" value="1"/>
</dbReference>
<dbReference type="PANTHER" id="PTHR11441">
    <property type="entry name" value="THYMIDINE KINASE"/>
    <property type="match status" value="1"/>
</dbReference>
<dbReference type="PANTHER" id="PTHR11441:SF0">
    <property type="entry name" value="THYMIDINE KINASE, CYTOSOLIC"/>
    <property type="match status" value="1"/>
</dbReference>
<dbReference type="Pfam" id="PF00265">
    <property type="entry name" value="TK"/>
    <property type="match status" value="1"/>
</dbReference>
<dbReference type="PIRSF" id="PIRSF035805">
    <property type="entry name" value="TK_cell"/>
    <property type="match status" value="1"/>
</dbReference>
<dbReference type="SUPFAM" id="SSF57716">
    <property type="entry name" value="Glucocorticoid receptor-like (DNA-binding domain)"/>
    <property type="match status" value="1"/>
</dbReference>
<dbReference type="SUPFAM" id="SSF52540">
    <property type="entry name" value="P-loop containing nucleoside triphosphate hydrolases"/>
    <property type="match status" value="1"/>
</dbReference>
<proteinExistence type="inferred from homology"/>
<evidence type="ECO:0000255" key="1">
    <source>
        <dbReference type="HAMAP-Rule" id="MF_00124"/>
    </source>
</evidence>
<feature type="chain" id="PRO_0000174966" description="Thymidine kinase">
    <location>
        <begin position="1"/>
        <end position="192"/>
    </location>
</feature>
<feature type="active site" description="Proton acceptor" evidence="1">
    <location>
        <position position="89"/>
    </location>
</feature>
<feature type="binding site" evidence="1">
    <location>
        <begin position="9"/>
        <end position="16"/>
    </location>
    <ligand>
        <name>ATP</name>
        <dbReference type="ChEBI" id="CHEBI:30616"/>
    </ligand>
</feature>
<feature type="binding site" evidence="1">
    <location>
        <begin position="88"/>
        <end position="91"/>
    </location>
    <ligand>
        <name>ATP</name>
        <dbReference type="ChEBI" id="CHEBI:30616"/>
    </ligand>
</feature>
<feature type="binding site" evidence="1">
    <location>
        <position position="146"/>
    </location>
    <ligand>
        <name>Zn(2+)</name>
        <dbReference type="ChEBI" id="CHEBI:29105"/>
    </ligand>
</feature>
<feature type="binding site" evidence="1">
    <location>
        <position position="148"/>
    </location>
    <ligand>
        <name>Zn(2+)</name>
        <dbReference type="ChEBI" id="CHEBI:29105"/>
    </ligand>
</feature>
<feature type="binding site" evidence="1">
    <location>
        <position position="183"/>
    </location>
    <ligand>
        <name>Zn(2+)</name>
        <dbReference type="ChEBI" id="CHEBI:29105"/>
    </ligand>
</feature>
<feature type="binding site" evidence="1">
    <location>
        <position position="186"/>
    </location>
    <ligand>
        <name>Zn(2+)</name>
        <dbReference type="ChEBI" id="CHEBI:29105"/>
    </ligand>
</feature>
<gene>
    <name evidence="1" type="primary">tdk</name>
    <name type="ordered locus">Bfl434</name>
</gene>
<comment type="catalytic activity">
    <reaction evidence="1">
        <text>thymidine + ATP = dTMP + ADP + H(+)</text>
        <dbReference type="Rhea" id="RHEA:19129"/>
        <dbReference type="ChEBI" id="CHEBI:15378"/>
        <dbReference type="ChEBI" id="CHEBI:17748"/>
        <dbReference type="ChEBI" id="CHEBI:30616"/>
        <dbReference type="ChEBI" id="CHEBI:63528"/>
        <dbReference type="ChEBI" id="CHEBI:456216"/>
        <dbReference type="EC" id="2.7.1.21"/>
    </reaction>
</comment>
<comment type="subunit">
    <text evidence="1">Homotetramer.</text>
</comment>
<comment type="subcellular location">
    <subcellularLocation>
        <location evidence="1">Cytoplasm</location>
    </subcellularLocation>
</comment>
<comment type="similarity">
    <text evidence="1">Belongs to the thymidine kinase family.</text>
</comment>
<keyword id="KW-0067">ATP-binding</keyword>
<keyword id="KW-0963">Cytoplasm</keyword>
<keyword id="KW-0237">DNA synthesis</keyword>
<keyword id="KW-0418">Kinase</keyword>
<keyword id="KW-0479">Metal-binding</keyword>
<keyword id="KW-0547">Nucleotide-binding</keyword>
<keyword id="KW-1185">Reference proteome</keyword>
<keyword id="KW-0808">Transferase</keyword>
<keyword id="KW-0862">Zinc</keyword>
<sequence length="192" mass="22186">MSKLYFYYSAMNAGKTTALLQSSYNYQERGMRTLLYTAAVVCQKNDIKYIRSRIGLTSSARIFNGKTNLFKQISIVNKEKKIHCILIDECHFLNRNQVIDLTKVVDILNIPVLCYGLRTDFQSKLFSGSLWLLAWADKLIELKTICYCGRQANRVLRIDNNGCVIRAGSQIMFGDNNQYVSVCRKHFHKKYN</sequence>